<reference key="1">
    <citation type="journal article" date="2006" name="Nature">
        <title>Analysis of the DNA sequence and duplication history of human chromosome 15.</title>
        <authorList>
            <person name="Zody M.C."/>
            <person name="Garber M."/>
            <person name="Sharpe T."/>
            <person name="Young S.K."/>
            <person name="Rowen L."/>
            <person name="O'Neill K."/>
            <person name="Whittaker C.A."/>
            <person name="Kamal M."/>
            <person name="Chang J.L."/>
            <person name="Cuomo C.A."/>
            <person name="Dewar K."/>
            <person name="FitzGerald M.G."/>
            <person name="Kodira C.D."/>
            <person name="Madan A."/>
            <person name="Qin S."/>
            <person name="Yang X."/>
            <person name="Abbasi N."/>
            <person name="Abouelleil A."/>
            <person name="Arachchi H.M."/>
            <person name="Baradarani L."/>
            <person name="Birditt B."/>
            <person name="Bloom S."/>
            <person name="Bloom T."/>
            <person name="Borowsky M.L."/>
            <person name="Burke J."/>
            <person name="Butler J."/>
            <person name="Cook A."/>
            <person name="DeArellano K."/>
            <person name="DeCaprio D."/>
            <person name="Dorris L. III"/>
            <person name="Dors M."/>
            <person name="Eichler E.E."/>
            <person name="Engels R."/>
            <person name="Fahey J."/>
            <person name="Fleetwood P."/>
            <person name="Friedman C."/>
            <person name="Gearin G."/>
            <person name="Hall J.L."/>
            <person name="Hensley G."/>
            <person name="Johnson E."/>
            <person name="Jones C."/>
            <person name="Kamat A."/>
            <person name="Kaur A."/>
            <person name="Locke D.P."/>
            <person name="Madan A."/>
            <person name="Munson G."/>
            <person name="Jaffe D.B."/>
            <person name="Lui A."/>
            <person name="Macdonald P."/>
            <person name="Mauceli E."/>
            <person name="Naylor J.W."/>
            <person name="Nesbitt R."/>
            <person name="Nicol R."/>
            <person name="O'Leary S.B."/>
            <person name="Ratcliffe A."/>
            <person name="Rounsley S."/>
            <person name="She X."/>
            <person name="Sneddon K.M.B."/>
            <person name="Stewart S."/>
            <person name="Sougnez C."/>
            <person name="Stone S.M."/>
            <person name="Topham K."/>
            <person name="Vincent D."/>
            <person name="Wang S."/>
            <person name="Zimmer A.R."/>
            <person name="Birren B.W."/>
            <person name="Hood L."/>
            <person name="Lander E.S."/>
            <person name="Nusbaum C."/>
        </authorList>
    </citation>
    <scope>NUCLEOTIDE SEQUENCE [LARGE SCALE GENOMIC DNA]</scope>
</reference>
<reference key="2">
    <citation type="journal article" date="2003" name="Genome Res.">
        <title>The secreted protein discovery initiative (SPDI), a large-scale effort to identify novel human secreted and transmembrane proteins: a bioinformatics assessment.</title>
        <authorList>
            <person name="Clark H.F."/>
            <person name="Gurney A.L."/>
            <person name="Abaya E."/>
            <person name="Baker K."/>
            <person name="Baldwin D.T."/>
            <person name="Brush J."/>
            <person name="Chen J."/>
            <person name="Chow B."/>
            <person name="Chui C."/>
            <person name="Crowley C."/>
            <person name="Currell B."/>
            <person name="Deuel B."/>
            <person name="Dowd P."/>
            <person name="Eaton D."/>
            <person name="Foster J.S."/>
            <person name="Grimaldi C."/>
            <person name="Gu Q."/>
            <person name="Hass P.E."/>
            <person name="Heldens S."/>
            <person name="Huang A."/>
            <person name="Kim H.S."/>
            <person name="Klimowski L."/>
            <person name="Jin Y."/>
            <person name="Johnson S."/>
            <person name="Lee J."/>
            <person name="Lewis L."/>
            <person name="Liao D."/>
            <person name="Mark M.R."/>
            <person name="Robbie E."/>
            <person name="Sanchez C."/>
            <person name="Schoenfeld J."/>
            <person name="Seshagiri S."/>
            <person name="Simmons L."/>
            <person name="Singh J."/>
            <person name="Smith V."/>
            <person name="Stinson J."/>
            <person name="Vagts A."/>
            <person name="Vandlen R.L."/>
            <person name="Watanabe C."/>
            <person name="Wieand D."/>
            <person name="Woods K."/>
            <person name="Xie M.-H."/>
            <person name="Yansura D.G."/>
            <person name="Yi S."/>
            <person name="Yu G."/>
            <person name="Yuan J."/>
            <person name="Zhang M."/>
            <person name="Zhang Z."/>
            <person name="Goddard A.D."/>
            <person name="Wood W.I."/>
            <person name="Godowski P.J."/>
            <person name="Gray A.M."/>
        </authorList>
    </citation>
    <scope>NUCLEOTIDE SEQUENCE [LARGE SCALE MRNA] OF 453-1343</scope>
</reference>
<reference key="3">
    <citation type="journal article" date="2004" name="Genome Res.">
        <title>The status, quality, and expansion of the NIH full-length cDNA project: the Mammalian Gene Collection (MGC).</title>
        <authorList>
            <consortium name="The MGC Project Team"/>
        </authorList>
    </citation>
    <scope>NUCLEOTIDE SEQUENCE [LARGE SCALE MRNA] OF 462-1343</scope>
    <scope>VARIANTS ILE-958 AND ARG-1005</scope>
    <source>
        <tissue>Heart</tissue>
        <tissue>Lung</tissue>
        <tissue>Ovary</tissue>
    </source>
</reference>
<reference key="4">
    <citation type="journal article" date="2004" name="Int. J. Oncol.">
        <title>Characterization of KIF7 gene in silico.</title>
        <authorList>
            <person name="Katoh Y."/>
            <person name="Katoh M."/>
        </authorList>
    </citation>
    <scope>IDENTIFICATION</scope>
</reference>
<reference key="5">
    <citation type="journal article" date="2008" name="Proc. Natl. Acad. Sci. U.S.A.">
        <title>A quantitative atlas of mitotic phosphorylation.</title>
        <authorList>
            <person name="Dephoure N."/>
            <person name="Zhou C."/>
            <person name="Villen J."/>
            <person name="Beausoleil S.A."/>
            <person name="Bakalarski C.E."/>
            <person name="Elledge S.J."/>
            <person name="Gygi S.P."/>
        </authorList>
    </citation>
    <scope>IDENTIFICATION BY MASS SPECTROMETRY [LARGE SCALE ANALYSIS]</scope>
    <source>
        <tissue>Cervix carcinoma</tissue>
    </source>
</reference>
<reference key="6">
    <citation type="journal article" date="2009" name="Anal. Chem.">
        <title>Lys-N and trypsin cover complementary parts of the phosphoproteome in a refined SCX-based approach.</title>
        <authorList>
            <person name="Gauci S."/>
            <person name="Helbig A.O."/>
            <person name="Slijper M."/>
            <person name="Krijgsveld J."/>
            <person name="Heck A.J."/>
            <person name="Mohammed S."/>
        </authorList>
    </citation>
    <scope>IDENTIFICATION BY MASS SPECTROMETRY [LARGE SCALE ANALYSIS]</scope>
</reference>
<reference key="7">
    <citation type="journal article" date="2009" name="Curr. Biol.">
        <title>The mammalian Cos2 homolog Kif7 plays an essential role in modulating Hh signal transduction during development.</title>
        <authorList>
            <person name="Endoh-Yamagami S."/>
            <person name="Evangelista M."/>
            <person name="Wilson D."/>
            <person name="Wen X."/>
            <person name="Theunissen J.W."/>
            <person name="Phamluong K."/>
            <person name="Davis M."/>
            <person name="Scales S.J."/>
            <person name="Solloway M.J."/>
            <person name="de Sauvage F.J."/>
            <person name="Peterson A.S."/>
        </authorList>
    </citation>
    <scope>SUBCELLULAR LOCATION</scope>
    <scope>INTERACTION WITH GLI1; GLI2; GLI3; SMO AND SUFU</scope>
</reference>
<reference key="8">
    <citation type="journal article" date="2011" name="BMC Syst. Biol.">
        <title>Initial characterization of the human central proteome.</title>
        <authorList>
            <person name="Burkard T.R."/>
            <person name="Planyavsky M."/>
            <person name="Kaupe I."/>
            <person name="Breitwieser F.P."/>
            <person name="Buerckstuemmer T."/>
            <person name="Bennett K.L."/>
            <person name="Superti-Furga G."/>
            <person name="Colinge J."/>
        </authorList>
    </citation>
    <scope>IDENTIFICATION BY MASS SPECTROMETRY [LARGE SCALE ANALYSIS]</scope>
</reference>
<reference key="9">
    <citation type="journal article" date="2011" name="J. Clin. Invest.">
        <title>Mutations in KIF7 link Joubert syndrome with Sonic Hedgehog signaling and microtubule dynamics.</title>
        <authorList>
            <person name="Dafinger C."/>
            <person name="Liebau M.C."/>
            <person name="Elsayed S.M."/>
            <person name="Hellenbroich Y."/>
            <person name="Boltshauser E."/>
            <person name="Korenke G.C."/>
            <person name="Fabretti F."/>
            <person name="Janecke A.R."/>
            <person name="Ebermann I."/>
            <person name="Nurnberg G."/>
            <person name="Nurnberg P."/>
            <person name="Zentgraf H."/>
            <person name="Koerber F."/>
            <person name="Addicks K."/>
            <person name="Elsobky E."/>
            <person name="Benzing T."/>
            <person name="Schermer B."/>
            <person name="Bolz H.J."/>
        </authorList>
    </citation>
    <scope>FUNCTION</scope>
    <scope>INTERACTION WITH NPHP1</scope>
    <scope>TISSUE SPECIFICITY</scope>
    <scope>VARIANT JBTS12 1329-ARG--SER-1332 DEL</scope>
</reference>
<reference key="10">
    <citation type="journal article" date="2011" name="Nat. Genet.">
        <title>KIF7 mutations cause fetal hydrolethalus and acrocallosal syndromes.</title>
        <authorList>
            <person name="Putoux A."/>
            <person name="Thomas S."/>
            <person name="Coene K.L."/>
            <person name="Davis E.E."/>
            <person name="Alanay Y."/>
            <person name="Ogur G."/>
            <person name="Uz E."/>
            <person name="Buzas D."/>
            <person name="Gomes C."/>
            <person name="Patrier S."/>
            <person name="Bennett C.L."/>
            <person name="Elkhartoufi N."/>
            <person name="Frison M.H."/>
            <person name="Rigonnot L."/>
            <person name="Joye N."/>
            <person name="Pruvost S."/>
            <person name="Utine G.E."/>
            <person name="Boduroglu K."/>
            <person name="Nitschke P."/>
            <person name="Fertitta L."/>
            <person name="Thauvin-Robinet C."/>
            <person name="Munnich A."/>
            <person name="Cormier-Daire V."/>
            <person name="Hennekam R."/>
            <person name="Colin E."/>
            <person name="Akarsu N.A."/>
            <person name="Bole-Feysot C."/>
            <person name="Cagnard N."/>
            <person name="Schmitt A."/>
            <person name="Goudin N."/>
            <person name="Lyonnet S."/>
            <person name="Encha-Razavi F."/>
            <person name="Siffroi J.P."/>
            <person name="Winey M."/>
            <person name="Katsanis N."/>
            <person name="Gonzales M."/>
            <person name="Vekemans M."/>
            <person name="Beales P.L."/>
            <person name="Attie-Bitach T."/>
        </authorList>
    </citation>
    <scope>INVOLVEMENT IN CILIOPATHIES</scope>
    <scope>INVOLVEMENT IN HLS2</scope>
    <scope>VARIANTS BBS GLY-641; ARG-994 AND TRP-1068</scope>
    <scope>VARIANT ACLS GLN-702</scope>
    <scope>VARIANTS LEU-632; PRO-759; ARG-834 AND GLN-1115</scope>
    <scope>CHARACTERIZATION OF VARIANTS BBS GLY-641; ARG-994 AND TRP-1068</scope>
    <scope>CHARACTERIZATION OF VARIANT ACLS GLN-702</scope>
    <scope>CHARACTERIZATION OF VARIANTS PRO-759 AND ARG-834</scope>
</reference>
<reference key="11">
    <citation type="journal article" date="2012" name="J. Med. Genet.">
        <title>Novel KIF7 mutations extend the phenotypic spectrum of acrocallosal syndrome.</title>
        <authorList>
            <person name="Putoux A."/>
            <person name="Nampoothiri S."/>
            <person name="Laurent N."/>
            <person name="Cormier-Daire V."/>
            <person name="Beales P.L."/>
            <person name="Schinzel A."/>
            <person name="Bartholdi D."/>
            <person name="Alby C."/>
            <person name="Thomas S."/>
            <person name="Elkhartoufi N."/>
            <person name="Ichkou A."/>
            <person name="Litzler J."/>
            <person name="Munnich A."/>
            <person name="Encha-Razavi F."/>
            <person name="Kannan R."/>
            <person name="Faivre L."/>
            <person name="Boddaert N."/>
            <person name="Rauch A."/>
            <person name="Vekemans M."/>
            <person name="Attie-Bitach T."/>
        </authorList>
    </citation>
    <scope>INVOLVEMENT IN ACLS</scope>
</reference>
<reference key="12">
    <citation type="journal article" date="2012" name="Orphanet J. Rare Dis.">
        <title>A mutation in KIF7 is responsible for the autosomal recessive syndrome of macrocephaly, multiple epiphyseal dysplasia and distinctive facial appearance.</title>
        <authorList>
            <person name="Ali B.R."/>
            <person name="Silhavy J.L."/>
            <person name="Akawi N.A."/>
            <person name="Gleeson J.G."/>
            <person name="Al-Gazali L."/>
        </authorList>
    </citation>
    <scope>INVOLVEMENT IN AGBK</scope>
    <scope>VARIANT AGBK SER-1060</scope>
</reference>
<reference key="13">
    <citation type="journal article" date="2015" name="Am. J. Med. Genet. A">
        <title>Novel KIF7 missense substitutions in two patients presenting with multiple malformations and features of acrocallosal syndrome.</title>
        <authorList>
            <person name="Tunovic S."/>
            <person name="Baranano K.W."/>
            <person name="Barkovich J.A."/>
            <person name="Strober J.B."/>
            <person name="Jamal L."/>
            <person name="Slavotinek A.M."/>
        </authorList>
    </citation>
    <scope>INVOLVEMENT IN ACLS</scope>
    <scope>VARIANTS ACLS GLN-154; MET-828; LYS-987 AND TRP-1122</scope>
</reference>
<sequence>MGLEAQRLPGAEEAPVRVALRVRPLLPKELLHGHQSCLQVEPGLGRVTLGRDRHFGFHVVLAEDAGQEAVYQACVQPLLEAFFEGFNATVFAYGQTGSGKTYTMGEASVASLLEDEQGIVPRAMAEAFKLIDENDLLDCLVHVSYLEVYKEEFRDLLEVGTASRDIQLREDERGNVVLCGVKEVDVEGLDEVLSLLEMGNAARHTGATHLNHLSSRSHTVFTVTLEQRGRAPSRLPRPAPGQLLVSKFHFVDLAGSERVLKTGSTGERLKESIQINSSLLALGNVISALGDPQRRGSHIPYRDSKITRILKDSLGGNAKTVMIACVSPSSSDFDETLNTLNYASRAQNIRNRATVNWRPEAERPPEETASGARGPPRHRSETRIIHRGRRAPGPATASAAAAMRLGAECARYRACTDAAYSLLRELQAEPGLPGAAARKVRDWLCAVEGERSALSSASGPDSGIESASVEDQAAQGAGGRKEDEGAQQLLTLQNQVARLEEENRDFLAALEDAMEQYKLQSDRLREQQEEMVELRLRLELVRPGWGGPRLLNGLPPGSFVPRPHTAPLGGAHAHVLGMVPPACLPGDEVGSEQRGEQVTNGREAGAELLTEVNRLGSGSSAASEEEEEEEEPPRRTLHLRRNRISNCSQRAGARPGSLPERKGPELCLEELDAAIPGSRAVGGSKARVQARQVPPATASEWRLAQAQQKIRELAINIRMKEELIGELVRTGKAAQALNRQHSQRIRELEQEAEQVRAELSEGQRQLRELEGKELQDAGERSRLQEFRRRVAAAQSQVQVLKEKKQATERLVSLSAQSEKRLQELERNVQLMRQQQGQLQRRLREETEQKRRLEAEMSKRQHRVKELELKHEQQQKILKIKTEEIAAFQRKRRSGSNGSVVSLEQQQKIEEQKKWLDQEMEKVLQQRRALEELGEELHKREAILAKKEALMQEKTGLESKRLRSSQALNEDIVRVSSRLEHLEKELSEKSGQLRQGSAQSQQQIRGEIDSLRQEKDSLLKQRLEIDGKLRQGSLLSPEEERTLFQLDEAIEALDAAIEYKNEAITCRQRVLRASASLLSQCEMNLMAKLSYLSSSETRALLCKYFDKVVTLREEQHQQQIAFSELEMQLEEQQRLVYWLEVALERQRLEMDRQLTLQQKEHEQNMQLLLQQSRDHLGEGLADSRRQYEARIQALEKELGRYMWINQELKQKLGGVNAVGHSRGGEKRSLCSEGRQAPGNEDELHLAPELLWLSPLTEGAPRTREETRDLVHAPLPLTWKRSSLCGEEQGSPEELRQREAAEPLVGRVLPVGEAGLPWNFGPLSKPRRELRRASPGMIDVRKNPL</sequence>
<keyword id="KW-0002">3D-structure</keyword>
<keyword id="KW-0067">ATP-binding</keyword>
<keyword id="KW-0083">Bardet-Biedl syndrome</keyword>
<keyword id="KW-0966">Cell projection</keyword>
<keyword id="KW-1186">Ciliopathy</keyword>
<keyword id="KW-0969">Cilium</keyword>
<keyword id="KW-0175">Coiled coil</keyword>
<keyword id="KW-0963">Cytoplasm</keyword>
<keyword id="KW-0206">Cytoskeleton</keyword>
<keyword id="KW-0225">Disease variant</keyword>
<keyword id="KW-0991">Intellectual disability</keyword>
<keyword id="KW-0979">Joubert syndrome</keyword>
<keyword id="KW-0505">Motor protein</keyword>
<keyword id="KW-0547">Nucleotide-binding</keyword>
<keyword id="KW-0550">Obesity</keyword>
<keyword id="KW-0597">Phosphoprotein</keyword>
<keyword id="KW-1267">Proteomics identification</keyword>
<keyword id="KW-1185">Reference proteome</keyword>
<keyword id="KW-0678">Repressor</keyword>
<keyword id="KW-0832">Ubl conjugation</keyword>
<feature type="chain" id="PRO_0000307146" description="Kinesin-like protein KIF7">
    <location>
        <begin position="1"/>
        <end position="1343"/>
    </location>
</feature>
<feature type="domain" description="Kinesin motor" evidence="3">
    <location>
        <begin position="15"/>
        <end position="349"/>
    </location>
</feature>
<feature type="region of interest" description="Disordered" evidence="4">
    <location>
        <begin position="356"/>
        <end position="382"/>
    </location>
</feature>
<feature type="region of interest" description="Interaction with SMO" evidence="1">
    <location>
        <begin position="358"/>
        <end position="1206"/>
    </location>
</feature>
<feature type="region of interest" description="Interaction with DLG5" evidence="1">
    <location>
        <begin position="358"/>
        <end position="479"/>
    </location>
</feature>
<feature type="region of interest" description="Disordered" evidence="4">
    <location>
        <begin position="451"/>
        <end position="483"/>
    </location>
</feature>
<feature type="region of interest" description="Sufficient for interaction with NPHP1" evidence="8">
    <location>
        <begin position="513"/>
        <end position="775"/>
    </location>
</feature>
<feature type="region of interest" description="Disordered" evidence="4">
    <location>
        <begin position="611"/>
        <end position="639"/>
    </location>
</feature>
<feature type="region of interest" description="Disordered" evidence="4">
    <location>
        <begin position="1219"/>
        <end position="1238"/>
    </location>
</feature>
<feature type="region of interest" description="Disordered" evidence="4">
    <location>
        <begin position="1310"/>
        <end position="1343"/>
    </location>
</feature>
<feature type="coiled-coil region" evidence="2">
    <location>
        <begin position="480"/>
        <end position="542"/>
    </location>
</feature>
<feature type="coiled-coil region" evidence="2">
    <location>
        <begin position="698"/>
        <end position="1057"/>
    </location>
</feature>
<feature type="coiled-coil region" evidence="2">
    <location>
        <begin position="1109"/>
        <end position="1211"/>
    </location>
</feature>
<feature type="binding site" evidence="3">
    <location>
        <begin position="94"/>
        <end position="101"/>
    </location>
    <ligand>
        <name>ATP</name>
        <dbReference type="ChEBI" id="CHEBI:30616"/>
    </ligand>
</feature>
<feature type="modified residue" description="Phosphoserine" evidence="1">
    <location>
        <position position="898"/>
    </location>
</feature>
<feature type="sequence variant" id="VAR_061287" description="In dbSNP:rs8179065.">
    <original>D</original>
    <variation>N</variation>
    <location>
        <position position="52"/>
    </location>
</feature>
<feature type="sequence variant" id="VAR_077692" description="In ACLS; uncertain significance; atypical phenotype; dbSNP:rs180758272." evidence="11">
    <original>R</original>
    <variation>Q</variation>
    <location>
        <position position="154"/>
    </location>
</feature>
<feature type="sequence variant" id="VAR_066450" description="In dbSNP:rs115857753." evidence="7">
    <original>P</original>
    <variation>L</variation>
    <location>
        <position position="632"/>
    </location>
</feature>
<feature type="sequence variant" id="VAR_066451" description="In BBS; the patient also carries homozygous mutation R-390 in BBS1; may affect splicing; hypomorphic variant in vitro; dbSNP:rs137905815." evidence="7">
    <original>R</original>
    <variation>G</variation>
    <location>
        <position position="641"/>
    </location>
</feature>
<feature type="sequence variant" id="VAR_066452" description="In ACLS; may affect splicing; hypomorphic mutation in vitro; dbSNP:rs149078926." evidence="7">
    <original>R</original>
    <variation>Q</variation>
    <location>
        <position position="702"/>
    </location>
</feature>
<feature type="sequence variant" id="VAR_066453" description="Found in a patient with Bardet-Biedl syndrome; uncertain significance; hypomorphic variant in vitro." evidence="7">
    <original>L</original>
    <variation>P</variation>
    <location>
        <position position="759"/>
    </location>
</feature>
<feature type="sequence variant" id="VAR_077693" description="In ACLS; uncertain significance; atypical phenotype; dbSNP:rs143915145." evidence="11">
    <original>V</original>
    <variation>M</variation>
    <location>
        <position position="828"/>
    </location>
</feature>
<feature type="sequence variant" id="VAR_066454" description="Found in a patient with Bardet-Biedl syndrome also carrying a frameshift mutation in BBS10 and variant P-293 in BBS7; uncertain significance; dbSNP:rs138354681." evidence="7">
    <original>Q</original>
    <variation>R</variation>
    <location>
        <position position="834"/>
    </location>
</feature>
<feature type="sequence variant" id="VAR_035363" description="In dbSNP:rs3803530." evidence="5">
    <original>S</original>
    <variation>I</variation>
    <location>
        <position position="958"/>
    </location>
</feature>
<feature type="sequence variant" id="VAR_077694" description="In ACLS; uncertain significance; atypical phenotype; dbSNP:rs146626238." evidence="11">
    <original>E</original>
    <variation>K</variation>
    <location>
        <position position="987"/>
    </location>
</feature>
<feature type="sequence variant" id="VAR_066455" description="In BBS; the patient is a compound heterozygote for a truncating mutation and mutation R-390 in BBS1; hypomorphic variant in vitro; dbSNP:rs138410949." evidence="7">
    <original>Q</original>
    <variation>R</variation>
    <location>
        <position position="994"/>
    </location>
</feature>
<feature type="sequence variant" id="VAR_035364" description="In dbSNP:rs12900805." evidence="5">
    <original>G</original>
    <variation>R</variation>
    <location>
        <position position="1005"/>
    </location>
</feature>
<feature type="sequence variant" id="VAR_071185" description="In AGBK; dbSNP:rs886039282." evidence="9">
    <original>N</original>
    <variation>S</variation>
    <location>
        <position position="1060"/>
    </location>
</feature>
<feature type="sequence variant" id="VAR_066456" description="In BBS; the patient is a compound heterozygote for two frameshift mutations in BBS9; hypomorphic variant in vitro; dbSNP:rs147191956." evidence="7">
    <original>R</original>
    <variation>W</variation>
    <location>
        <position position="1068"/>
    </location>
</feature>
<feature type="sequence variant" id="VAR_066457" description="In dbSNP:rs142032413." evidence="7">
    <original>H</original>
    <variation>Q</variation>
    <location>
        <position position="1115"/>
    </location>
</feature>
<feature type="sequence variant" id="VAR_077695" description="In ACLS; uncertain significance; atypical phenotype; dbSNP:rs202195179." evidence="11">
    <original>S</original>
    <variation>W</variation>
    <location>
        <position position="1122"/>
    </location>
</feature>
<feature type="sequence variant" id="VAR_066458" description="In JBTS12; found in a patient with Joubert syndrome that also carries mutations L-358 and T-833 in TMEM67." evidence="8">
    <location>
        <begin position="1329"/>
        <end position="1332"/>
    </location>
</feature>
<feature type="sequence conflict" description="In Ref. 2; AAQ88750." evidence="12" ref="2">
    <original>P</original>
    <variation>L</variation>
    <location>
        <position position="548"/>
    </location>
</feature>
<feature type="strand" evidence="13">
    <location>
        <begin position="17"/>
        <end position="22"/>
    </location>
</feature>
<feature type="helix" evidence="13">
    <location>
        <begin position="27"/>
        <end position="31"/>
    </location>
</feature>
<feature type="strand" evidence="13">
    <location>
        <begin position="38"/>
        <end position="41"/>
    </location>
</feature>
<feature type="helix" evidence="13">
    <location>
        <begin position="42"/>
        <end position="44"/>
    </location>
</feature>
<feature type="strand" evidence="13">
    <location>
        <begin position="46"/>
        <end position="49"/>
    </location>
</feature>
<feature type="turn" evidence="13">
    <location>
        <begin position="50"/>
        <end position="52"/>
    </location>
</feature>
<feature type="strand" evidence="13">
    <location>
        <begin position="53"/>
        <end position="56"/>
    </location>
</feature>
<feature type="strand" evidence="13">
    <location>
        <begin position="58"/>
        <end position="61"/>
    </location>
</feature>
<feature type="helix" evidence="13">
    <location>
        <begin position="67"/>
        <end position="74"/>
    </location>
</feature>
<feature type="helix" evidence="13">
    <location>
        <begin position="76"/>
        <end position="83"/>
    </location>
</feature>
<feature type="strand" evidence="13">
    <location>
        <begin position="88"/>
        <end position="95"/>
    </location>
</feature>
<feature type="helix" evidence="13">
    <location>
        <begin position="100"/>
        <end position="104"/>
    </location>
</feature>
<feature type="helix" evidence="13">
    <location>
        <begin position="119"/>
        <end position="133"/>
    </location>
</feature>
<feature type="strand" evidence="13">
    <location>
        <begin position="137"/>
        <end position="149"/>
    </location>
</feature>
<feature type="strand" evidence="13">
    <location>
        <begin position="152"/>
        <end position="155"/>
    </location>
</feature>
<feature type="helix" evidence="13">
    <location>
        <begin position="163"/>
        <end position="165"/>
    </location>
</feature>
<feature type="strand" evidence="13">
    <location>
        <begin position="167"/>
        <end position="170"/>
    </location>
</feature>
<feature type="strand" evidence="13">
    <location>
        <begin position="176"/>
        <end position="180"/>
    </location>
</feature>
<feature type="helix" evidence="13">
    <location>
        <begin position="189"/>
        <end position="204"/>
    </location>
</feature>
<feature type="helix" evidence="13">
    <location>
        <begin position="214"/>
        <end position="216"/>
    </location>
</feature>
<feature type="strand" evidence="13">
    <location>
        <begin position="217"/>
        <end position="228"/>
    </location>
</feature>
<feature type="strand" evidence="13">
    <location>
        <begin position="243"/>
        <end position="252"/>
    </location>
</feature>
<feature type="helix" evidence="13">
    <location>
        <begin position="278"/>
        <end position="289"/>
    </location>
</feature>
<feature type="turn" evidence="13">
    <location>
        <begin position="292"/>
        <end position="296"/>
    </location>
</feature>
<feature type="helix" evidence="13">
    <location>
        <begin position="301"/>
        <end position="303"/>
    </location>
</feature>
<feature type="helix" evidence="13">
    <location>
        <begin position="305"/>
        <end position="309"/>
    </location>
</feature>
<feature type="turn" evidence="13">
    <location>
        <begin position="310"/>
        <end position="312"/>
    </location>
</feature>
<feature type="strand" evidence="13">
    <location>
        <begin position="313"/>
        <end position="315"/>
    </location>
</feature>
<feature type="strand" evidence="13">
    <location>
        <begin position="318"/>
        <end position="326"/>
    </location>
</feature>
<feature type="helix" evidence="13">
    <location>
        <begin position="330"/>
        <end position="332"/>
    </location>
</feature>
<feature type="helix" evidence="13">
    <location>
        <begin position="333"/>
        <end position="345"/>
    </location>
</feature>
<evidence type="ECO:0000250" key="1">
    <source>
        <dbReference type="UniProtKB" id="B7ZNG0"/>
    </source>
</evidence>
<evidence type="ECO:0000255" key="2"/>
<evidence type="ECO:0000255" key="3">
    <source>
        <dbReference type="PROSITE-ProRule" id="PRU00283"/>
    </source>
</evidence>
<evidence type="ECO:0000256" key="4">
    <source>
        <dbReference type="SAM" id="MobiDB-lite"/>
    </source>
</evidence>
<evidence type="ECO:0000269" key="5">
    <source>
    </source>
</evidence>
<evidence type="ECO:0000269" key="6">
    <source>
    </source>
</evidence>
<evidence type="ECO:0000269" key="7">
    <source>
    </source>
</evidence>
<evidence type="ECO:0000269" key="8">
    <source>
    </source>
</evidence>
<evidence type="ECO:0000269" key="9">
    <source>
    </source>
</evidence>
<evidence type="ECO:0000269" key="10">
    <source>
    </source>
</evidence>
<evidence type="ECO:0000269" key="11">
    <source>
    </source>
</evidence>
<evidence type="ECO:0000305" key="12"/>
<evidence type="ECO:0007829" key="13">
    <source>
        <dbReference type="PDB" id="4A14"/>
    </source>
</evidence>
<gene>
    <name type="primary">KIF7</name>
    <name type="ORF">UNQ340/PRO539</name>
</gene>
<accession>Q2M1P5</accession>
<accession>Q3SXY0</accession>
<accession>Q6UXE9</accession>
<accession>Q8IW72</accession>
<comment type="function">
    <text evidence="1 8">Essential for hedgehog signaling regulation: acts both as a negative and positive regulator of sonic hedgehog (Shh) and Indian hedgehog (Ihh) pathways, acting downstream of SMO, through both SUFU-dependent and -independent mechanisms (PubMed:21633164). Involved in the regulation of microtubular dynamics. Required for proper organization of the ciliary tip and control of ciliary localization of SUFU-GLI2 complexes (By similarity). Required for localization of GLI3 to cilia in response to Shh. Negatively regulates Shh signaling by preventing inappropriate activation of the transcriptional activator GLI2 in the absence of ligand. Positively regulates Shh signaling by preventing the processing of the transcription factor GLI3 into its repressor form. In keratinocytes, promotes the dissociation of SUFU-GLI2 complexes, GLI2 nuclear translocation and Shh signaling activation (By similarity). Involved in the regulation of epidermal differentiation and chondrocyte development (By similarity).</text>
</comment>
<comment type="subunit">
    <text evidence="1 6 8">Can form homodimers and interacts with microtubules (By similarity). Interacts with GLI1, GLI2, GLI3, SMO and SUFU (PubMed:19592253). Interacts with NPHP1 (PubMed:21633164). Interacts with SMO and DLG5 (via PDZ4 or guanylate kinase-like domain) (By similarity).</text>
</comment>
<comment type="interaction">
    <interactant intactId="EBI-2512228">
        <id>Q2M1P5</id>
    </interactant>
    <interactant intactId="EBI-348033">
        <id>O15460</id>
        <label>P4HA2</label>
    </interactant>
    <organismsDiffer>false</organismsDiffer>
    <experiments>2</experiments>
</comment>
<comment type="subcellular location">
    <subcellularLocation>
        <location evidence="6">Cell projection</location>
        <location evidence="6">Cilium</location>
    </subcellularLocation>
    <subcellularLocation>
        <location evidence="1">Cytoplasm</location>
        <location evidence="1">Cytoskeleton</location>
        <location evidence="1">Cilium basal body</location>
    </subcellularLocation>
    <text>Localizes to the cilium tip.</text>
</comment>
<comment type="tissue specificity">
    <text evidence="8">Embryonic stem cells, melanotic melanoma and Jurkat T-cells. Expressed in heart, lung, liver, kidney, testis, retina, placenta, pancreas, colon, small intestin, prostate and thymus.</text>
</comment>
<comment type="PTM">
    <text evidence="1">Polyubiquitinated by UBR3.</text>
</comment>
<comment type="disease">
    <text>Ciliary dysfunction leads to a broad spectrum of disorders, collectively termed ciliopathies. The ciliopathy range of diseases includes Meckel-Gruber syndrome, Bardet-Biedl syndrome, Joubert syndrome, and hydrolethalus syndrome among others. Single-locus allelism is insufficient to explain the variable penetrance and expressivity of such disorders, leading to the suggestion that variations across multiple sites of the ciliary proteome influence the clinical outcome. Primary ciliopathy loci can be modulated by pathogenic lesions in other ciliary genes to either exacerbate overall severity or induce specific endophenotypes. KIF7 may be causally associated with diverse ciliopathies, and also acts as a modifier gene across the ciliopathy spectrum.</text>
</comment>
<comment type="disease" evidence="7">
    <disease id="DI-03107">
        <name>Bardet-Biedl syndrome</name>
        <acronym>BBS</acronym>
        <description>A syndrome characterized by usually severe pigmentary retinopathy, early-onset obesity, polydactyly, hypogenitalism, renal malformation and intellectual disability. Secondary features include diabetes mellitus, hypertension and congenital heart disease. Bardet-Biedl syndrome inheritance is autosomal recessive, but three mutated alleles (two at one locus, and a third at a second locus) may be required for clinical manifestation of some forms of the disease.</description>
        <dbReference type="MIM" id="209900"/>
    </disease>
    <text>The gene represented in this entry may act as a disease modifier. Heterozygous missense mutations in KIF7 may genetically interact with other BBS genes and contribute to disease manifestation and severity.</text>
</comment>
<comment type="disease" evidence="7">
    <disease id="DI-03208">
        <name>Hydrolethalus syndrome 2</name>
        <acronym>HLS2</acronym>
        <description>An embryonic lethal disorder characterized by hydrocephaly or anencephaly, postaxial polydactyly of the upper limbs, and pre- or postaxial polydactyly of the lower limbs. Duplication of the hallux is a common finding.</description>
        <dbReference type="MIM" id="614120"/>
    </disease>
    <text>The disease is caused by variants affecting the gene represented in this entry.</text>
</comment>
<comment type="disease" evidence="7 10 11">
    <disease id="DI-00025">
        <name>Acrocallosal syndrome</name>
        <acronym>ACLS</acronym>
        <description>An autosomal recessive syndrome characterized by hypogenesis or agenesis of the corpus callosum. Clinical features include postaxial polydactyly, hallux duplication, macrocephaly, craniofacial abnormalities, severe developmental delay and intellectual disability.</description>
        <dbReference type="MIM" id="200990"/>
    </disease>
    <text>The disease is caused by variants affecting the gene represented in this entry.</text>
</comment>
<comment type="disease" evidence="8">
    <disease id="DI-03219">
        <name>Joubert syndrome 12</name>
        <acronym>JBTS12</acronym>
        <description>A disorder presenting with cerebellar ataxia, oculomotor apraxia, hypotonia, neonatal breathing abnormalities and psychomotor delay. Neuroradiologically, it is characterized by cerebellar vermian hypoplasia/aplasia, thickened and reoriented superior cerebellar peduncles, and an abnormally large interpeduncular fossa, giving the appearance of a molar tooth on transaxial slices (molar tooth sign). Additional variable features include retinal dystrophy and renal disease.</description>
        <dbReference type="MIM" id="200990"/>
    </disease>
    <text>The disease is caused by variants affecting the gene represented in this entry.</text>
</comment>
<comment type="disease" evidence="9">
    <disease id="DI-04658">
        <name>Al-Gazali-Bakalinova syndrome</name>
        <acronym>AGBK</acronym>
        <description>An autosomal recessive syndrome consisting of macrocephaly, multiple epiphyseal dysplasia and distinctive facial appearance.</description>
        <dbReference type="MIM" id="607131"/>
    </disease>
    <text>The disease is caused by variants affecting the gene represented in this entry.</text>
</comment>
<comment type="similarity">
    <text evidence="3">Belongs to the TRAFAC class myosin-kinesin ATPase superfamily. Kinesin family. KIF27 subfamily.</text>
</comment>
<comment type="sequence caution" evidence="12">
    <conflict type="erroneous initiation">
        <sequence resource="EMBL-CDS" id="AAI04045"/>
    </conflict>
    <text>Truncated N-terminus.</text>
</comment>
<comment type="sequence caution" evidence="12">
    <conflict type="erroneous initiation">
        <sequence resource="EMBL-CDS" id="AAI12272"/>
    </conflict>
    <text>Truncated N-terminus.</text>
</comment>
<comment type="sequence caution" evidence="12">
    <conflict type="erroneous initiation">
        <sequence resource="EMBL-CDS" id="AAI12274"/>
    </conflict>
    <text>Truncated N-terminus.</text>
</comment>
<comment type="sequence caution" evidence="12">
    <conflict type="erroneous initiation">
        <sequence resource="EMBL-CDS" id="AAQ88750"/>
    </conflict>
    <text>Truncated N-terminus.</text>
</comment>
<name>KIF7_HUMAN</name>
<proteinExistence type="evidence at protein level"/>
<organism>
    <name type="scientific">Homo sapiens</name>
    <name type="common">Human</name>
    <dbReference type="NCBI Taxonomy" id="9606"/>
    <lineage>
        <taxon>Eukaryota</taxon>
        <taxon>Metazoa</taxon>
        <taxon>Chordata</taxon>
        <taxon>Craniata</taxon>
        <taxon>Vertebrata</taxon>
        <taxon>Euteleostomi</taxon>
        <taxon>Mammalia</taxon>
        <taxon>Eutheria</taxon>
        <taxon>Euarchontoglires</taxon>
        <taxon>Primates</taxon>
        <taxon>Haplorrhini</taxon>
        <taxon>Catarrhini</taxon>
        <taxon>Hominidae</taxon>
        <taxon>Homo</taxon>
    </lineage>
</organism>
<dbReference type="EMBL" id="AC079075">
    <property type="status" value="NOT_ANNOTATED_CDS"/>
    <property type="molecule type" value="Genomic_DNA"/>
</dbReference>
<dbReference type="EMBL" id="AY358384">
    <property type="protein sequence ID" value="AAQ88750.1"/>
    <property type="status" value="ALT_INIT"/>
    <property type="molecule type" value="mRNA"/>
</dbReference>
<dbReference type="EMBL" id="BC040878">
    <property type="protein sequence ID" value="AAH40878.1"/>
    <property type="molecule type" value="mRNA"/>
</dbReference>
<dbReference type="EMBL" id="BC104044">
    <property type="protein sequence ID" value="AAI04045.1"/>
    <property type="status" value="ALT_INIT"/>
    <property type="molecule type" value="mRNA"/>
</dbReference>
<dbReference type="EMBL" id="BC112271">
    <property type="protein sequence ID" value="AAI12272.1"/>
    <property type="status" value="ALT_INIT"/>
    <property type="molecule type" value="mRNA"/>
</dbReference>
<dbReference type="EMBL" id="BC112273">
    <property type="protein sequence ID" value="AAI12274.1"/>
    <property type="status" value="ALT_INIT"/>
    <property type="molecule type" value="mRNA"/>
</dbReference>
<dbReference type="CCDS" id="CCDS32325.2"/>
<dbReference type="RefSeq" id="NP_940927.2">
    <property type="nucleotide sequence ID" value="NM_198525.3"/>
</dbReference>
<dbReference type="PDB" id="2XT3">
    <property type="method" value="X-ray"/>
    <property type="resolution" value="1.88 A"/>
    <property type="chains" value="A=8-347"/>
</dbReference>
<dbReference type="PDB" id="4A14">
    <property type="method" value="X-ray"/>
    <property type="resolution" value="1.60 A"/>
    <property type="chains" value="A=8-347"/>
</dbReference>
<dbReference type="PDB" id="6MLQ">
    <property type="method" value="EM"/>
    <property type="resolution" value="4.20 A"/>
    <property type="chains" value="C=1-398"/>
</dbReference>
<dbReference type="PDB" id="6MLR">
    <property type="method" value="EM"/>
    <property type="resolution" value="4.20 A"/>
    <property type="chains" value="C=1-398"/>
</dbReference>
<dbReference type="PDB" id="7RX0">
    <property type="method" value="EM"/>
    <property type="resolution" value="3.89 A"/>
    <property type="chains" value="C=1-543"/>
</dbReference>
<dbReference type="PDBsum" id="2XT3"/>
<dbReference type="PDBsum" id="4A14"/>
<dbReference type="PDBsum" id="6MLQ"/>
<dbReference type="PDBsum" id="6MLR"/>
<dbReference type="PDBsum" id="7RX0"/>
<dbReference type="EMDB" id="EMD-24721"/>
<dbReference type="EMDB" id="EMD-9140"/>
<dbReference type="EMDB" id="EMD-9141"/>
<dbReference type="SMR" id="Q2M1P5"/>
<dbReference type="BioGRID" id="131912">
    <property type="interactions" value="145"/>
</dbReference>
<dbReference type="FunCoup" id="Q2M1P5">
    <property type="interactions" value="872"/>
</dbReference>
<dbReference type="IntAct" id="Q2M1P5">
    <property type="interactions" value="94"/>
</dbReference>
<dbReference type="MINT" id="Q2M1P5"/>
<dbReference type="STRING" id="9606.ENSP00000377934"/>
<dbReference type="ChEMBL" id="CHEMBL2021751"/>
<dbReference type="GlyGen" id="Q2M1P5">
    <property type="glycosylation" value="1 site, 1 O-linked glycan (1 site)"/>
</dbReference>
<dbReference type="iPTMnet" id="Q2M1P5"/>
<dbReference type="PhosphoSitePlus" id="Q2M1P5"/>
<dbReference type="BioMuta" id="KIF7"/>
<dbReference type="DMDM" id="172045866"/>
<dbReference type="jPOST" id="Q2M1P5"/>
<dbReference type="MassIVE" id="Q2M1P5"/>
<dbReference type="PaxDb" id="9606-ENSP00000377934"/>
<dbReference type="PeptideAtlas" id="Q2M1P5"/>
<dbReference type="ProteomicsDB" id="61341"/>
<dbReference type="Pumba" id="Q2M1P5"/>
<dbReference type="Antibodypedia" id="51762">
    <property type="antibodies" value="104 antibodies from 21 providers"/>
</dbReference>
<dbReference type="DNASU" id="374654"/>
<dbReference type="Ensembl" id="ENST00000394412.8">
    <property type="protein sequence ID" value="ENSP00000377934.3"/>
    <property type="gene ID" value="ENSG00000166813.17"/>
</dbReference>
<dbReference type="GeneID" id="374654"/>
<dbReference type="KEGG" id="hsa:374654"/>
<dbReference type="MANE-Select" id="ENST00000394412.8">
    <property type="protein sequence ID" value="ENSP00000377934.3"/>
    <property type="RefSeq nucleotide sequence ID" value="NM_198525.3"/>
    <property type="RefSeq protein sequence ID" value="NP_940927.2"/>
</dbReference>
<dbReference type="UCSC" id="uc002bof.3">
    <property type="organism name" value="human"/>
</dbReference>
<dbReference type="AGR" id="HGNC:30497"/>
<dbReference type="CTD" id="374654"/>
<dbReference type="DisGeNET" id="374654"/>
<dbReference type="GeneCards" id="KIF7"/>
<dbReference type="GeneReviews" id="KIF7"/>
<dbReference type="HGNC" id="HGNC:30497">
    <property type="gene designation" value="KIF7"/>
</dbReference>
<dbReference type="HPA" id="ENSG00000166813">
    <property type="expression patterns" value="Low tissue specificity"/>
</dbReference>
<dbReference type="MalaCards" id="KIF7"/>
<dbReference type="MIM" id="200990">
    <property type="type" value="phenotype"/>
</dbReference>
<dbReference type="MIM" id="209900">
    <property type="type" value="phenotype"/>
</dbReference>
<dbReference type="MIM" id="607131">
    <property type="type" value="phenotype"/>
</dbReference>
<dbReference type="MIM" id="611254">
    <property type="type" value="gene"/>
</dbReference>
<dbReference type="MIM" id="614120">
    <property type="type" value="phenotype"/>
</dbReference>
<dbReference type="neXtProt" id="NX_Q2M1P5"/>
<dbReference type="OpenTargets" id="ENSG00000166813"/>
<dbReference type="Orphanet" id="36">
    <property type="disease" value="Acrocallosal syndrome"/>
</dbReference>
<dbReference type="Orphanet" id="2189">
    <property type="disease" value="Hydrolethalus"/>
</dbReference>
<dbReference type="Orphanet" id="166024">
    <property type="disease" value="Multiple epiphyseal dysplasia-macrocephaly-facial dysmorphism syndrome"/>
</dbReference>
<dbReference type="Orphanet" id="2754">
    <property type="disease" value="Orofaciodigital syndrome type 6"/>
</dbReference>
<dbReference type="PharmGKB" id="PA134871338"/>
<dbReference type="VEuPathDB" id="HostDB:ENSG00000166813"/>
<dbReference type="eggNOG" id="KOG0244">
    <property type="taxonomic scope" value="Eukaryota"/>
</dbReference>
<dbReference type="GeneTree" id="ENSGT00940000159749"/>
<dbReference type="HOGENOM" id="CLU_005591_0_0_1"/>
<dbReference type="InParanoid" id="Q2M1P5"/>
<dbReference type="OMA" id="WLYPLTE"/>
<dbReference type="OrthoDB" id="3176171at2759"/>
<dbReference type="PAN-GO" id="Q2M1P5">
    <property type="GO annotations" value="6 GO annotations based on evolutionary models"/>
</dbReference>
<dbReference type="PhylomeDB" id="Q2M1P5"/>
<dbReference type="TreeFam" id="TF325946"/>
<dbReference type="PathwayCommons" id="Q2M1P5"/>
<dbReference type="Reactome" id="R-HSA-5610787">
    <property type="pathway name" value="Hedgehog 'off' state"/>
</dbReference>
<dbReference type="Reactome" id="R-HSA-5632684">
    <property type="pathway name" value="Hedgehog 'on' state"/>
</dbReference>
<dbReference type="SignaLink" id="Q2M1P5"/>
<dbReference type="SIGNOR" id="Q2M1P5"/>
<dbReference type="BioGRID-ORCS" id="374654">
    <property type="hits" value="11 hits in 1159 CRISPR screens"/>
</dbReference>
<dbReference type="ChiTaRS" id="KIF7">
    <property type="organism name" value="human"/>
</dbReference>
<dbReference type="EvolutionaryTrace" id="Q2M1P5"/>
<dbReference type="GenomeRNAi" id="374654"/>
<dbReference type="Pharos" id="Q2M1P5">
    <property type="development level" value="Tbio"/>
</dbReference>
<dbReference type="PRO" id="PR:Q2M1P5"/>
<dbReference type="Proteomes" id="UP000005640">
    <property type="component" value="Chromosome 15"/>
</dbReference>
<dbReference type="RNAct" id="Q2M1P5">
    <property type="molecule type" value="protein"/>
</dbReference>
<dbReference type="Bgee" id="ENSG00000166813">
    <property type="expression patterns" value="Expressed in primordial germ cell in gonad and 113 other cell types or tissues"/>
</dbReference>
<dbReference type="ExpressionAtlas" id="Q2M1P5">
    <property type="expression patterns" value="baseline and differential"/>
</dbReference>
<dbReference type="GO" id="GO:0036064">
    <property type="term" value="C:ciliary basal body"/>
    <property type="evidence" value="ECO:0000250"/>
    <property type="project" value="UniProtKB"/>
</dbReference>
<dbReference type="GO" id="GO:0097542">
    <property type="term" value="C:ciliary tip"/>
    <property type="evidence" value="ECO:0000304"/>
    <property type="project" value="Reactome"/>
</dbReference>
<dbReference type="GO" id="GO:0005929">
    <property type="term" value="C:cilium"/>
    <property type="evidence" value="ECO:0000314"/>
    <property type="project" value="UniProtKB"/>
</dbReference>
<dbReference type="GO" id="GO:0005737">
    <property type="term" value="C:cytoplasm"/>
    <property type="evidence" value="ECO:0000318"/>
    <property type="project" value="GO_Central"/>
</dbReference>
<dbReference type="GO" id="GO:0005829">
    <property type="term" value="C:cytosol"/>
    <property type="evidence" value="ECO:0000314"/>
    <property type="project" value="HPA"/>
</dbReference>
<dbReference type="GO" id="GO:0001650">
    <property type="term" value="C:fibrillar center"/>
    <property type="evidence" value="ECO:0000314"/>
    <property type="project" value="HPA"/>
</dbReference>
<dbReference type="GO" id="GO:0043231">
    <property type="term" value="C:intracellular membrane-bounded organelle"/>
    <property type="evidence" value="ECO:0000314"/>
    <property type="project" value="HPA"/>
</dbReference>
<dbReference type="GO" id="GO:0005871">
    <property type="term" value="C:kinesin complex"/>
    <property type="evidence" value="ECO:0000318"/>
    <property type="project" value="GO_Central"/>
</dbReference>
<dbReference type="GO" id="GO:0005874">
    <property type="term" value="C:microtubule"/>
    <property type="evidence" value="ECO:0000318"/>
    <property type="project" value="GO_Central"/>
</dbReference>
<dbReference type="GO" id="GO:0005524">
    <property type="term" value="F:ATP binding"/>
    <property type="evidence" value="ECO:0007669"/>
    <property type="project" value="UniProtKB-KW"/>
</dbReference>
<dbReference type="GO" id="GO:0016887">
    <property type="term" value="F:ATP hydrolysis activity"/>
    <property type="evidence" value="ECO:0000318"/>
    <property type="project" value="GO_Central"/>
</dbReference>
<dbReference type="GO" id="GO:0008017">
    <property type="term" value="F:microtubule binding"/>
    <property type="evidence" value="ECO:0000318"/>
    <property type="project" value="GO_Central"/>
</dbReference>
<dbReference type="GO" id="GO:0003777">
    <property type="term" value="F:microtubule motor activity"/>
    <property type="evidence" value="ECO:0000314"/>
    <property type="project" value="UniProtKB"/>
</dbReference>
<dbReference type="GO" id="GO:0007018">
    <property type="term" value="P:microtubule-based movement"/>
    <property type="evidence" value="ECO:0000318"/>
    <property type="project" value="GO_Central"/>
</dbReference>
<dbReference type="GO" id="GO:0045879">
    <property type="term" value="P:negative regulation of smoothened signaling pathway"/>
    <property type="evidence" value="ECO:0000250"/>
    <property type="project" value="UniProtKB"/>
</dbReference>
<dbReference type="GO" id="GO:0045880">
    <property type="term" value="P:positive regulation of smoothened signaling pathway"/>
    <property type="evidence" value="ECO:0000250"/>
    <property type="project" value="UniProtKB"/>
</dbReference>
<dbReference type="CDD" id="cd01372">
    <property type="entry name" value="KISc_KIF4"/>
    <property type="match status" value="1"/>
</dbReference>
<dbReference type="FunFam" id="3.40.850.10:FF:000025">
    <property type="entry name" value="kinesin-like protein KIF27 isoform X1"/>
    <property type="match status" value="1"/>
</dbReference>
<dbReference type="Gene3D" id="3.40.850.10">
    <property type="entry name" value="Kinesin motor domain"/>
    <property type="match status" value="1"/>
</dbReference>
<dbReference type="InterPro" id="IPR027640">
    <property type="entry name" value="Kinesin-like_fam"/>
</dbReference>
<dbReference type="InterPro" id="IPR019821">
    <property type="entry name" value="Kinesin_motor_CS"/>
</dbReference>
<dbReference type="InterPro" id="IPR001752">
    <property type="entry name" value="Kinesin_motor_dom"/>
</dbReference>
<dbReference type="InterPro" id="IPR036961">
    <property type="entry name" value="Kinesin_motor_dom_sf"/>
</dbReference>
<dbReference type="InterPro" id="IPR027417">
    <property type="entry name" value="P-loop_NTPase"/>
</dbReference>
<dbReference type="PANTHER" id="PTHR47969">
    <property type="entry name" value="CHROMOSOME-ASSOCIATED KINESIN KIF4A-RELATED"/>
    <property type="match status" value="1"/>
</dbReference>
<dbReference type="PANTHER" id="PTHR47969:SF8">
    <property type="entry name" value="KINESIN FAMILY MEMBER 7"/>
    <property type="match status" value="1"/>
</dbReference>
<dbReference type="Pfam" id="PF00225">
    <property type="entry name" value="Kinesin"/>
    <property type="match status" value="1"/>
</dbReference>
<dbReference type="PRINTS" id="PR00380">
    <property type="entry name" value="KINESINHEAVY"/>
</dbReference>
<dbReference type="SMART" id="SM00129">
    <property type="entry name" value="KISc"/>
    <property type="match status" value="1"/>
</dbReference>
<dbReference type="SUPFAM" id="SSF52540">
    <property type="entry name" value="P-loop containing nucleoside triphosphate hydrolases"/>
    <property type="match status" value="1"/>
</dbReference>
<dbReference type="PROSITE" id="PS00411">
    <property type="entry name" value="KINESIN_MOTOR_1"/>
    <property type="match status" value="1"/>
</dbReference>
<dbReference type="PROSITE" id="PS50067">
    <property type="entry name" value="KINESIN_MOTOR_2"/>
    <property type="match status" value="1"/>
</dbReference>
<protein>
    <recommendedName>
        <fullName>Kinesin-like protein KIF7</fullName>
    </recommendedName>
</protein>